<feature type="signal peptide" evidence="3">
    <location>
        <begin position="1"/>
        <end position="22"/>
    </location>
</feature>
<feature type="propeptide" id="PRO_0000379907" evidence="4">
    <location>
        <begin position="23"/>
        <end position="48"/>
    </location>
</feature>
<feature type="peptide" id="PRO_0000044994" description="Omega-hexatoxin-Ar1a">
    <location>
        <begin position="49"/>
        <end position="85"/>
    </location>
</feature>
<feature type="site" description="Critical for insecticidal activity" evidence="2">
    <location>
        <position position="58"/>
    </location>
</feature>
<feature type="site" description="Critical for insecticidal activity" evidence="2">
    <location>
        <position position="75"/>
    </location>
</feature>
<feature type="site" description="Critical for insecticidal activity" evidence="2">
    <location>
        <position position="83"/>
    </location>
</feature>
<feature type="disulfide bond" evidence="2">
    <location>
        <begin position="52"/>
        <end position="66"/>
    </location>
</feature>
<feature type="disulfide bond" evidence="2">
    <location>
        <begin position="59"/>
        <end position="70"/>
    </location>
</feature>
<feature type="disulfide bond" evidence="2">
    <location>
        <begin position="65"/>
        <end position="84"/>
    </location>
</feature>
<name>TO1A_ATRRO</name>
<organism evidence="5">
    <name type="scientific">Atrax robustus</name>
    <name type="common">Sydney funnel-web spider</name>
    <dbReference type="NCBI Taxonomy" id="6903"/>
    <lineage>
        <taxon>Eukaryota</taxon>
        <taxon>Metazoa</taxon>
        <taxon>Ecdysozoa</taxon>
        <taxon>Arthropoda</taxon>
        <taxon>Chelicerata</taxon>
        <taxon>Arachnida</taxon>
        <taxon>Araneae</taxon>
        <taxon>Mygalomorphae</taxon>
        <taxon>Hexathelidae</taxon>
        <taxon>Atrax</taxon>
    </lineage>
</organism>
<keyword id="KW-0108">Calcium channel impairing toxin</keyword>
<keyword id="KW-0165">Cleavage on pair of basic residues</keyword>
<keyword id="KW-0903">Direct protein sequencing</keyword>
<keyword id="KW-1015">Disulfide bond</keyword>
<keyword id="KW-0872">Ion channel impairing toxin</keyword>
<keyword id="KW-0960">Knottin</keyword>
<keyword id="KW-0528">Neurotoxin</keyword>
<keyword id="KW-0964">Secreted</keyword>
<keyword id="KW-0732">Signal</keyword>
<keyword id="KW-0800">Toxin</keyword>
<keyword id="KW-1218">Voltage-gated calcium channel impairing toxin</keyword>
<keyword id="KW-0738">Voltage-gated sodium channel impairing toxin</keyword>
<comment type="function">
    <text evidence="4">Insecticidal toxin that reversibly and voltage-independently blocks both mid-low- (M-LVA) and high-voltage-activated (HVA) calcium channels (Cav) in cockroach DUM neurons. Also causes a modest block of insect sodium channel currents (Nav). Induces potent excitatory symptoms, followed by flaccid paralysis leading to death in house crickets.</text>
</comment>
<comment type="subcellular location">
    <subcellularLocation>
        <location evidence="4 5">Secreted</location>
    </subcellularLocation>
</comment>
<comment type="tissue specificity">
    <text evidence="4 5">Expressed by the venom gland.</text>
</comment>
<comment type="domain">
    <text evidence="1">The presence of a 'disulfide through disulfide knot' structurally defines this protein as a knottin.</text>
</comment>
<comment type="mass spectrometry" mass="4002.8" error="1.0" method="Electrospray" evidence="4"/>
<comment type="toxic dose">
    <text evidence="4">LD(50) is 236+-28 pmol/g in house crickets (Acheta domesticus) (at 48 hours post-injection).</text>
</comment>
<comment type="toxic dose">
    <text evidence="4">LD(50) is l43+-10 pmol/g in house crickets (Acheta domesticus) (at 72 hours post-injection).</text>
</comment>
<comment type="toxic dose">
    <text evidence="4">PD(50) is 147+-16 pmol/g in house crickets (Acheta domesticus) (at 48 hours post-injection).</text>
</comment>
<comment type="toxic dose">
    <text evidence="4">PD(50) is 124+-12 pmol/g in house crickets (Acheta domesticus) (at 72 hours post-injection).</text>
</comment>
<comment type="miscellaneous">
    <text>This toxin comes from a female specimen. It is observed that propeptide sequences coming from female specimen have only limited homology with the male paralogs, but the reason is unknown.</text>
</comment>
<comment type="miscellaneous">
    <text evidence="6">Negative results: does not inhibit potassium channel currents. Has no activity in vertebrate smooth and skeletal nerve-muscle preparations (PubMed:17610847).</text>
</comment>
<comment type="similarity">
    <text evidence="5">Belongs to the neurotoxin 08 (Shiva) family. 01 (omega toxin) subfamily.</text>
</comment>
<proteinExistence type="evidence at protein level"/>
<sequence length="85" mass="9010">MNTATGFIVLLVLATVLGAIEAEDAVPDFEGGFASHAREDTVGGKIRRSSVCIPSGQPCPYNEHCCSGSCTYKENENGNTVQRCD</sequence>
<accession>P83580</accession>
<accession>A5A3H0</accession>
<evidence type="ECO:0000250" key="1"/>
<evidence type="ECO:0000250" key="2">
    <source>
        <dbReference type="UniProtKB" id="P56207"/>
    </source>
</evidence>
<evidence type="ECO:0000255" key="3"/>
<evidence type="ECO:0000269" key="4">
    <source>
    </source>
</evidence>
<evidence type="ECO:0000305" key="5"/>
<evidence type="ECO:0000305" key="6">
    <source>
    </source>
</evidence>
<protein>
    <recommendedName>
        <fullName>Omega-hexatoxin-Ar1a</fullName>
        <shortName>Omega-HXTX-Ar1a</shortName>
    </recommendedName>
    <alternativeName>
        <fullName>Omega-atracotoxin-Ar1a</fullName>
        <shortName>Omega-AcTx-Ar1a</shortName>
    </alternativeName>
</protein>
<dbReference type="EMBL" id="EF523494">
    <property type="protein sequence ID" value="ABP63653.1"/>
    <property type="molecule type" value="mRNA"/>
</dbReference>
<dbReference type="SMR" id="P83580"/>
<dbReference type="ArachnoServer" id="AS000020">
    <property type="toxin name" value="omega-hexatoxin-Ar1a"/>
</dbReference>
<dbReference type="GO" id="GO:0005576">
    <property type="term" value="C:extracellular region"/>
    <property type="evidence" value="ECO:0007669"/>
    <property type="project" value="UniProtKB-SubCell"/>
</dbReference>
<dbReference type="GO" id="GO:0019855">
    <property type="term" value="F:calcium channel inhibitor activity"/>
    <property type="evidence" value="ECO:0007669"/>
    <property type="project" value="InterPro"/>
</dbReference>
<dbReference type="GO" id="GO:0017080">
    <property type="term" value="F:sodium channel regulator activity"/>
    <property type="evidence" value="ECO:0007669"/>
    <property type="project" value="UniProtKB-KW"/>
</dbReference>
<dbReference type="GO" id="GO:0090729">
    <property type="term" value="F:toxin activity"/>
    <property type="evidence" value="ECO:0007669"/>
    <property type="project" value="UniProtKB-KW"/>
</dbReference>
<dbReference type="GO" id="GO:0006952">
    <property type="term" value="P:defense response"/>
    <property type="evidence" value="ECO:0007669"/>
    <property type="project" value="InterPro"/>
</dbReference>
<dbReference type="InterPro" id="IPR009415">
    <property type="entry name" value="Omega-atracotox"/>
</dbReference>
<dbReference type="InterPro" id="IPR018071">
    <property type="entry name" value="Omega-atracotox_CS"/>
</dbReference>
<dbReference type="Pfam" id="PF06357">
    <property type="entry name" value="Omega-toxin"/>
    <property type="match status" value="1"/>
</dbReference>
<dbReference type="SUPFAM" id="SSF57059">
    <property type="entry name" value="omega toxin-like"/>
    <property type="match status" value="1"/>
</dbReference>
<dbReference type="PROSITE" id="PS60016">
    <property type="entry name" value="OMEGA_ACTX_1"/>
    <property type="match status" value="1"/>
</dbReference>
<reference key="1">
    <citation type="journal article" date="2007" name="Biochem. Pharmacol.">
        <title>The omega-atracotoxins: selective blockers of insect M-LVA and HVA calcium channels.</title>
        <authorList>
            <person name="Chong Y."/>
            <person name="Hayes J.L."/>
            <person name="Sollod B."/>
            <person name="Wen S."/>
            <person name="Wilson D.T."/>
            <person name="Hains P.G."/>
            <person name="Hodgson W.C."/>
            <person name="Broady K.W."/>
            <person name="King G.F."/>
            <person name="Nicholson G.M."/>
        </authorList>
    </citation>
    <scope>NUCLEOTIDE SEQUENCE [MRNA]</scope>
    <scope>PROTEIN SEQUENCE OF 49-85</scope>
    <scope>FUNCTION</scope>
    <scope>SUBCELLULAR LOCATION</scope>
    <scope>TISSUE SPECIFICITY</scope>
    <scope>MASS SPECTROMETRY</scope>
    <scope>TOXIC DOSE</scope>
    <source>
        <strain>XenFW194</strain>
        <tissue>Venom</tissue>
        <tissue>Venom gland</tissue>
    </source>
</reference>